<organism>
    <name type="scientific">Lettuce infectious yellows virus (isolate United States/92)</name>
    <name type="common">LIYV</name>
    <dbReference type="NCBI Taxonomy" id="651355"/>
    <lineage>
        <taxon>Viruses</taxon>
        <taxon>Riboviria</taxon>
        <taxon>Orthornavirae</taxon>
        <taxon>Kitrinoviricota</taxon>
        <taxon>Alsuviricetes</taxon>
        <taxon>Martellivirales</taxon>
        <taxon>Closteroviridae</taxon>
        <taxon>Crinivirus</taxon>
        <taxon>Lettuce infectious yellows virus</taxon>
    </lineage>
</organism>
<keyword id="KW-1185">Reference proteome</keyword>
<keyword id="KW-0946">Virion</keyword>
<evidence type="ECO:0000269" key="1">
    <source>
    </source>
</evidence>
<organismHost>
    <name type="scientific">Beta vulgaris</name>
    <name type="common">Sugar beet</name>
    <dbReference type="NCBI Taxonomy" id="161934"/>
</organismHost>
<organismHost>
    <name type="scientific">Citrullus lanatus</name>
    <name type="common">Watermelon</name>
    <name type="synonym">Citrullus vulgaris</name>
    <dbReference type="NCBI Taxonomy" id="3654"/>
</organismHost>
<organismHost>
    <name type="scientific">Cucumis melo</name>
    <name type="common">Muskmelon</name>
    <dbReference type="NCBI Taxonomy" id="3656"/>
</organismHost>
<organismHost>
    <name type="scientific">Cucurbita maxima</name>
    <name type="common">Pumpkin</name>
    <name type="synonym">Winter squash</name>
    <dbReference type="NCBI Taxonomy" id="3661"/>
</organismHost>
<organismHost>
    <name type="scientific">Cucurbita moschata</name>
    <name type="common">Winter crookneck squash</name>
    <name type="synonym">Cucurbita pepo var. moschata</name>
    <dbReference type="NCBI Taxonomy" id="3662"/>
</organismHost>
<organismHost>
    <name type="scientific">Cucurbita pepo</name>
    <name type="common">Vegetable marrow</name>
    <name type="synonym">Summer squash</name>
    <dbReference type="NCBI Taxonomy" id="3663"/>
</organismHost>
<organismHost>
    <name type="scientific">Daucus carota</name>
    <name type="common">Wild carrot</name>
    <dbReference type="NCBI Taxonomy" id="4039"/>
</organismHost>
<organismHost>
    <name type="scientific">Lactuca sativa</name>
    <name type="common">Garden lettuce</name>
    <dbReference type="NCBI Taxonomy" id="4236"/>
</organismHost>
<name>P59_LIYV9</name>
<dbReference type="EMBL" id="U15441">
    <property type="protein sequence ID" value="AAA61801.1"/>
    <property type="molecule type" value="Genomic_RNA"/>
</dbReference>
<dbReference type="RefSeq" id="NP_619696.1">
    <property type="nucleotide sequence ID" value="NC_003618.1"/>
</dbReference>
<dbReference type="GeneID" id="991076"/>
<dbReference type="KEGG" id="vg:991076"/>
<dbReference type="Proteomes" id="UP000001099">
    <property type="component" value="Genome"/>
</dbReference>
<dbReference type="GO" id="GO:0044423">
    <property type="term" value="C:virion component"/>
    <property type="evidence" value="ECO:0007669"/>
    <property type="project" value="UniProtKB-KW"/>
</dbReference>
<dbReference type="InterPro" id="IPR004909">
    <property type="entry name" value="Vir_Hsp90"/>
</dbReference>
<dbReference type="Pfam" id="PF03225">
    <property type="entry name" value="Viral_Hsp90"/>
    <property type="match status" value="1"/>
</dbReference>
<reference key="1">
    <citation type="journal article" date="1995" name="Virology">
        <title>Genome structure and phylogenetic analysis of lettuce infectious yellows virus, a whitefly-transmitted, bipartite closterovirus.</title>
        <authorList>
            <person name="Klaassen V.A."/>
            <person name="Boeshore M.L."/>
            <person name="Koonin E.V."/>
            <person name="Tian T."/>
            <person name="Falk B.W."/>
        </authorList>
    </citation>
    <scope>NUCLEOTIDE SEQUENCE [GENOMIC RNA]</scope>
</reference>
<reference key="2">
    <citation type="journal article" date="1999" name="J. Gen. Virol.">
        <title>Lettuce infectious yellows virus: in vitro acquisition analysis using partially purified virions and the whitefly Bemisia tabaci.</title>
        <authorList>
            <person name="Tian T."/>
            <person name="Rubio L."/>
            <person name="Yeh H.H."/>
            <person name="Crawford B."/>
            <person name="Falk B.W."/>
        </authorList>
    </citation>
    <scope>SUBCELLULAR LOCATION</scope>
</reference>
<sequence length="514" mass="59268">MLNDRIAVTCFQTLLKKSNVKHEMEQTNNYIVNNLADINRNTFPALAGSVRIDFNSDYYISGGQIVVSPKDSNAYVKLLIVYLKYCYINYSAKTKYPPQSLLAVLDYDSFKAKWVKYLDKSLTDYLDDNKTEGCSFTEQQVVEKYPQVDSLVAKILYRVCNSLGKLLDLKDFENKNISGFEINTAQDSPTVADDNESNDFFRECVNDQRYYSSLSGSKLGKAKLEANAYIFKILLKSASGEFDIDRLSRNPLAISKFMNLYTNHVTDSETFKSKFEALKSIKTPFASFIKKAFGIRLNFEDSKIFYALPKERQSDVLSDDMMVESIVRDAASFTVVSDNNYLPERVDRFVTQLLLELFPKTKASFPNKIMFGFLHYFALSTTNSKRFNDTQESTIEIEGETLKISLKFITSYLRNAIQSQHPDYADSNIVRLWCNKRSNLALGYFKSRNIQLYLYSKYPRLLNYMRFDYFKGLDMGKLTDEERLSIQTLRCITEDRSEGTLATHNDLNSWILRP</sequence>
<feature type="chain" id="PRO_0000402514" description="Protein p59">
    <location>
        <begin position="1"/>
        <end position="514"/>
    </location>
</feature>
<accession>Q83048</accession>
<proteinExistence type="predicted"/>
<comment type="subcellular location">
    <subcellularLocation>
        <location evidence="1">Virion</location>
    </subcellularLocation>
</comment>
<protein>
    <recommendedName>
        <fullName>Protein p59</fullName>
    </recommendedName>
</protein>